<evidence type="ECO:0000250" key="1">
    <source>
        <dbReference type="UniProtKB" id="P62829"/>
    </source>
</evidence>
<evidence type="ECO:0000269" key="2">
    <source>
    </source>
</evidence>
<evidence type="ECO:0000305" key="3"/>
<evidence type="ECO:0007744" key="4">
    <source>
        <dbReference type="PDB" id="7CPU"/>
    </source>
</evidence>
<evidence type="ECO:0007744" key="5">
    <source>
        <dbReference type="PDB" id="7CPV"/>
    </source>
</evidence>
<sequence>MSKRGRGGSSGAKFRISLGLPVGAVINCADNTGAKNLYIISVKGIKGRLNRLPAAGVGDMVMATVKKGKPELRKKVHPAVVIRQRKSYRRKDGVFLYFEDNAGVIVNNKGEMKGSAITGPVAKECADLWPRIASNAGSIA</sequence>
<gene>
    <name type="primary">Rpl23</name>
</gene>
<accession>P62830</accession>
<accession>P23131</accession>
<accession>P24048</accession>
<accession>Q29246</accession>
<accession>Q3THU4</accession>
<accession>Q9CZE6</accession>
<accession>Q9DCQ4</accession>
<name>RL23_MOUSE</name>
<comment type="function">
    <text evidence="2">Component of the large ribosomal subunit (PubMed:36517592). The ribosome is a large ribonucleoprotein complex responsible for the synthesis of proteins in the cell (PubMed:36517592).</text>
</comment>
<comment type="subunit">
    <text evidence="2">Component of the large ribosomal subunit.</text>
</comment>
<comment type="interaction">
    <interactant intactId="EBI-2365752">
        <id>P62830</id>
    </interactant>
    <interactant intactId="EBI-641788">
        <id>P23804</id>
        <label>Mdm2</label>
    </interactant>
    <organismsDiffer>false</organismsDiffer>
    <experiments>2</experiments>
</comment>
<comment type="subcellular location">
    <subcellularLocation>
        <location evidence="2">Cytoplasm</location>
    </subcellularLocation>
</comment>
<comment type="similarity">
    <text evidence="3">Belongs to the universal ribosomal protein uL14 family.</text>
</comment>
<proteinExistence type="evidence at protein level"/>
<feature type="chain" id="PRO_0000128613" description="Large ribosomal subunit protein uL14">
    <location>
        <begin position="1"/>
        <end position="140"/>
    </location>
</feature>
<feature type="modified residue" description="Phosphoserine" evidence="1">
    <location>
        <position position="17"/>
    </location>
</feature>
<feature type="modified residue" description="Phosphotyrosine" evidence="1">
    <location>
        <position position="38"/>
    </location>
</feature>
<feature type="sequence conflict" description="In Ref. 2; BAB22203." evidence="3" ref="2">
    <original>P</original>
    <variation>S</variation>
    <location>
        <position position="53"/>
    </location>
</feature>
<feature type="sequence conflict" description="In Ref. 2; BAB28415." evidence="3" ref="2">
    <original>M</original>
    <variation>I</variation>
    <location>
        <position position="112"/>
    </location>
</feature>
<dbReference type="EMBL" id="AF158022">
    <property type="protein sequence ID" value="AAD42413.1"/>
    <property type="molecule type" value="Genomic_DNA"/>
</dbReference>
<dbReference type="EMBL" id="AF287271">
    <property type="protein sequence ID" value="AAF88071.1"/>
    <property type="molecule type" value="mRNA"/>
</dbReference>
<dbReference type="EMBL" id="AK002579">
    <property type="protein sequence ID" value="BAB22203.1"/>
    <property type="molecule type" value="mRNA"/>
</dbReference>
<dbReference type="EMBL" id="AK010680">
    <property type="protein sequence ID" value="BAB27112.1"/>
    <property type="molecule type" value="mRNA"/>
</dbReference>
<dbReference type="EMBL" id="AK012694">
    <property type="protein sequence ID" value="BAB28415.1"/>
    <property type="molecule type" value="mRNA"/>
</dbReference>
<dbReference type="EMBL" id="AK018730">
    <property type="protein sequence ID" value="BAB31373.1"/>
    <property type="molecule type" value="mRNA"/>
</dbReference>
<dbReference type="EMBL" id="AK150671">
    <property type="protein sequence ID" value="BAE29753.1"/>
    <property type="molecule type" value="mRNA"/>
</dbReference>
<dbReference type="EMBL" id="AK168133">
    <property type="protein sequence ID" value="BAE40102.1"/>
    <property type="molecule type" value="mRNA"/>
</dbReference>
<dbReference type="EMBL" id="BC025918">
    <property type="protein sequence ID" value="AAH25918.1"/>
    <property type="molecule type" value="mRNA"/>
</dbReference>
<dbReference type="EMBL" id="BC081448">
    <property type="protein sequence ID" value="AAH81448.1"/>
    <property type="molecule type" value="mRNA"/>
</dbReference>
<dbReference type="CCDS" id="CCDS25331.1"/>
<dbReference type="RefSeq" id="NP_075029.1">
    <property type="nucleotide sequence ID" value="NM_022891.3"/>
</dbReference>
<dbReference type="RefSeq" id="XP_003688806.1">
    <property type="nucleotide sequence ID" value="XM_003688758.3"/>
</dbReference>
<dbReference type="RefSeq" id="XP_003689266.1">
    <property type="nucleotide sequence ID" value="XM_003689218.3"/>
</dbReference>
<dbReference type="PDB" id="6SWA">
    <property type="method" value="EM"/>
    <property type="resolution" value="3.10 A"/>
    <property type="chains" value="T=1-140"/>
</dbReference>
<dbReference type="PDB" id="7CPU">
    <property type="method" value="EM"/>
    <property type="resolution" value="2.82 A"/>
    <property type="chains" value="LV=1-140"/>
</dbReference>
<dbReference type="PDB" id="7CPV">
    <property type="method" value="EM"/>
    <property type="resolution" value="3.03 A"/>
    <property type="chains" value="LV=1-140"/>
</dbReference>
<dbReference type="PDB" id="7LS1">
    <property type="method" value="EM"/>
    <property type="resolution" value="3.30 A"/>
    <property type="chains" value="P2=1-140"/>
</dbReference>
<dbReference type="PDB" id="7LS2">
    <property type="method" value="EM"/>
    <property type="resolution" value="3.10 A"/>
    <property type="chains" value="P2=1-140"/>
</dbReference>
<dbReference type="PDBsum" id="6SWA"/>
<dbReference type="PDBsum" id="7CPU"/>
<dbReference type="PDBsum" id="7CPV"/>
<dbReference type="PDBsum" id="7LS1"/>
<dbReference type="PDBsum" id="7LS2"/>
<dbReference type="EMDB" id="EMD-10321"/>
<dbReference type="EMDB" id="EMD-23500"/>
<dbReference type="EMDB" id="EMD-23501"/>
<dbReference type="EMDB" id="EMD-30432"/>
<dbReference type="EMDB" id="EMD-30433"/>
<dbReference type="SMR" id="P62830"/>
<dbReference type="BioGRID" id="211121">
    <property type="interactions" value="75"/>
</dbReference>
<dbReference type="BioGRID" id="3404800">
    <property type="interactions" value="2"/>
</dbReference>
<dbReference type="BioGRID" id="787698">
    <property type="interactions" value="3"/>
</dbReference>
<dbReference type="ComplexPortal" id="CPX-5262">
    <property type="entry name" value="60S cytosolic large ribosomal subunit"/>
</dbReference>
<dbReference type="ComplexPortal" id="CPX-7662">
    <property type="entry name" value="60S cytosolic large ribosomal subunit, testis-specific variant"/>
</dbReference>
<dbReference type="ComplexPortal" id="CPX-7663">
    <property type="entry name" value="60S cytosolic large ribosomal subunit, striated muscle variant"/>
</dbReference>
<dbReference type="FunCoup" id="P62830">
    <property type="interactions" value="2288"/>
</dbReference>
<dbReference type="IntAct" id="P62830">
    <property type="interactions" value="10"/>
</dbReference>
<dbReference type="MINT" id="P62830"/>
<dbReference type="STRING" id="10090.ENSMUSP00000099435"/>
<dbReference type="GlyGen" id="P62830">
    <property type="glycosylation" value="1 site, 1 O-linked glycan (1 site)"/>
</dbReference>
<dbReference type="iPTMnet" id="P62830"/>
<dbReference type="PhosphoSitePlus" id="P62830"/>
<dbReference type="SwissPalm" id="P62830"/>
<dbReference type="jPOST" id="P62830"/>
<dbReference type="PaxDb" id="10090-ENSMUSP00000099435"/>
<dbReference type="PeptideAtlas" id="P62830"/>
<dbReference type="ProteomicsDB" id="253306"/>
<dbReference type="Pumba" id="P62830"/>
<dbReference type="Antibodypedia" id="1251">
    <property type="antibodies" value="185 antibodies from 30 providers"/>
</dbReference>
<dbReference type="DNASU" id="65019"/>
<dbReference type="Ensembl" id="ENSMUST00000103146.5">
    <property type="protein sequence ID" value="ENSMUSP00000099435.5"/>
    <property type="gene ID" value="ENSMUSG00000071415.7"/>
</dbReference>
<dbReference type="GeneID" id="65019"/>
<dbReference type="KEGG" id="mmu:65019"/>
<dbReference type="UCSC" id="uc007leu.2">
    <property type="organism name" value="mouse"/>
</dbReference>
<dbReference type="AGR" id="MGI:1929455"/>
<dbReference type="CTD" id="9349"/>
<dbReference type="MGI" id="MGI:1929455">
    <property type="gene designation" value="Rpl23"/>
</dbReference>
<dbReference type="VEuPathDB" id="HostDB:ENSMUSG00000071415"/>
<dbReference type="eggNOG" id="KOG0901">
    <property type="taxonomic scope" value="Eukaryota"/>
</dbReference>
<dbReference type="GeneTree" id="ENSGT00390000004690"/>
<dbReference type="HOGENOM" id="CLU_095071_3_0_1"/>
<dbReference type="InParanoid" id="P62830"/>
<dbReference type="OMA" id="MIQMQTR"/>
<dbReference type="OrthoDB" id="407959at2759"/>
<dbReference type="PhylomeDB" id="P62830"/>
<dbReference type="TreeFam" id="TF300913"/>
<dbReference type="Reactome" id="R-MMU-156827">
    <property type="pathway name" value="L13a-mediated translational silencing of Ceruloplasmin expression"/>
</dbReference>
<dbReference type="Reactome" id="R-MMU-1799339">
    <property type="pathway name" value="SRP-dependent cotranslational protein targeting to membrane"/>
</dbReference>
<dbReference type="Reactome" id="R-MMU-6791226">
    <property type="pathway name" value="Major pathway of rRNA processing in the nucleolus and cytosol"/>
</dbReference>
<dbReference type="Reactome" id="R-MMU-72689">
    <property type="pathway name" value="Formation of a pool of free 40S subunits"/>
</dbReference>
<dbReference type="Reactome" id="R-MMU-72706">
    <property type="pathway name" value="GTP hydrolysis and joining of the 60S ribosomal subunit"/>
</dbReference>
<dbReference type="Reactome" id="R-MMU-975956">
    <property type="pathway name" value="Nonsense Mediated Decay (NMD) independent of the Exon Junction Complex (EJC)"/>
</dbReference>
<dbReference type="Reactome" id="R-MMU-975957">
    <property type="pathway name" value="Nonsense Mediated Decay (NMD) enhanced by the Exon Junction Complex (EJC)"/>
</dbReference>
<dbReference type="BioGRID-ORCS" id="65019">
    <property type="hits" value="26 hits in 70 CRISPR screens"/>
</dbReference>
<dbReference type="CD-CODE" id="CE726F99">
    <property type="entry name" value="Postsynaptic density"/>
</dbReference>
<dbReference type="ChiTaRS" id="Rpl23">
    <property type="organism name" value="mouse"/>
</dbReference>
<dbReference type="PRO" id="PR:P62830"/>
<dbReference type="Proteomes" id="UP000000589">
    <property type="component" value="Chromosome 11"/>
</dbReference>
<dbReference type="RNAct" id="P62830">
    <property type="molecule type" value="protein"/>
</dbReference>
<dbReference type="Bgee" id="ENSMUSG00000071415">
    <property type="expression patterns" value="Expressed in yolk sac and 231 other cell types or tissues"/>
</dbReference>
<dbReference type="ExpressionAtlas" id="P62830">
    <property type="expression patterns" value="baseline and differential"/>
</dbReference>
<dbReference type="GO" id="GO:0005737">
    <property type="term" value="C:cytoplasm"/>
    <property type="evidence" value="ECO:0000314"/>
    <property type="project" value="ComplexPortal"/>
</dbReference>
<dbReference type="GO" id="GO:0005829">
    <property type="term" value="C:cytosol"/>
    <property type="evidence" value="ECO:0000304"/>
    <property type="project" value="Reactome"/>
</dbReference>
<dbReference type="GO" id="GO:0022625">
    <property type="term" value="C:cytosolic large ribosomal subunit"/>
    <property type="evidence" value="ECO:0000314"/>
    <property type="project" value="UniProtKB"/>
</dbReference>
<dbReference type="GO" id="GO:0022626">
    <property type="term" value="C:cytosolic ribosome"/>
    <property type="evidence" value="ECO:0000266"/>
    <property type="project" value="MGI"/>
</dbReference>
<dbReference type="GO" id="GO:0005730">
    <property type="term" value="C:nucleolus"/>
    <property type="evidence" value="ECO:0000314"/>
    <property type="project" value="MGI"/>
</dbReference>
<dbReference type="GO" id="GO:0005654">
    <property type="term" value="C:nucleoplasm"/>
    <property type="evidence" value="ECO:0007669"/>
    <property type="project" value="Ensembl"/>
</dbReference>
<dbReference type="GO" id="GO:0098794">
    <property type="term" value="C:postsynapse"/>
    <property type="evidence" value="ECO:0000303"/>
    <property type="project" value="SynGO"/>
</dbReference>
<dbReference type="GO" id="GO:0098793">
    <property type="term" value="C:presynapse"/>
    <property type="evidence" value="ECO:0000303"/>
    <property type="project" value="SynGO"/>
</dbReference>
<dbReference type="GO" id="GO:0005840">
    <property type="term" value="C:ribosome"/>
    <property type="evidence" value="ECO:0000303"/>
    <property type="project" value="SynGO"/>
</dbReference>
<dbReference type="GO" id="GO:0045202">
    <property type="term" value="C:synapse"/>
    <property type="evidence" value="ECO:0000314"/>
    <property type="project" value="SynGO"/>
</dbReference>
<dbReference type="GO" id="GO:0003735">
    <property type="term" value="F:structural constituent of ribosome"/>
    <property type="evidence" value="ECO:0000314"/>
    <property type="project" value="UniProtKB"/>
</dbReference>
<dbReference type="GO" id="GO:0001223">
    <property type="term" value="F:transcription coactivator binding"/>
    <property type="evidence" value="ECO:0007669"/>
    <property type="project" value="Ensembl"/>
</dbReference>
<dbReference type="GO" id="GO:1990948">
    <property type="term" value="F:ubiquitin ligase inhibitor activity"/>
    <property type="evidence" value="ECO:0007669"/>
    <property type="project" value="Ensembl"/>
</dbReference>
<dbReference type="GO" id="GO:0031625">
    <property type="term" value="F:ubiquitin protein ligase binding"/>
    <property type="evidence" value="ECO:0007669"/>
    <property type="project" value="Ensembl"/>
</dbReference>
<dbReference type="GO" id="GO:0072717">
    <property type="term" value="P:cellular response to actinomycin D"/>
    <property type="evidence" value="ECO:0007669"/>
    <property type="project" value="Ensembl"/>
</dbReference>
<dbReference type="GO" id="GO:0002181">
    <property type="term" value="P:cytoplasmic translation"/>
    <property type="evidence" value="ECO:0000303"/>
    <property type="project" value="ComplexPortal"/>
</dbReference>
<dbReference type="GO" id="GO:0070314">
    <property type="term" value="P:G1 to G0 transition"/>
    <property type="evidence" value="ECO:0007669"/>
    <property type="project" value="Ensembl"/>
</dbReference>
<dbReference type="GO" id="GO:0000122">
    <property type="term" value="P:negative regulation of transcription by RNA polymerase II"/>
    <property type="evidence" value="ECO:0007669"/>
    <property type="project" value="Ensembl"/>
</dbReference>
<dbReference type="GO" id="GO:2000059">
    <property type="term" value="P:negative regulation of ubiquitin-dependent protein catabolic process"/>
    <property type="evidence" value="ECO:0007669"/>
    <property type="project" value="Ensembl"/>
</dbReference>
<dbReference type="GO" id="GO:0008284">
    <property type="term" value="P:positive regulation of cell population proliferation"/>
    <property type="evidence" value="ECO:0007669"/>
    <property type="project" value="Ensembl"/>
</dbReference>
<dbReference type="GO" id="GO:0010628">
    <property type="term" value="P:positive regulation of gene expression"/>
    <property type="evidence" value="ECO:0007669"/>
    <property type="project" value="Ensembl"/>
</dbReference>
<dbReference type="GO" id="GO:1901798">
    <property type="term" value="P:positive regulation of signal transduction by p53 class mediator"/>
    <property type="evidence" value="ECO:0007669"/>
    <property type="project" value="Ensembl"/>
</dbReference>
<dbReference type="GO" id="GO:0050821">
    <property type="term" value="P:protein stabilization"/>
    <property type="evidence" value="ECO:0007669"/>
    <property type="project" value="Ensembl"/>
</dbReference>
<dbReference type="GO" id="GO:0032986">
    <property type="term" value="P:protein-DNA complex disassembly"/>
    <property type="evidence" value="ECO:0007669"/>
    <property type="project" value="Ensembl"/>
</dbReference>
<dbReference type="GO" id="GO:1903450">
    <property type="term" value="P:regulation of G1 to G0 transition"/>
    <property type="evidence" value="ECO:0007669"/>
    <property type="project" value="Ensembl"/>
</dbReference>
<dbReference type="GO" id="GO:0006412">
    <property type="term" value="P:translation"/>
    <property type="evidence" value="ECO:0000266"/>
    <property type="project" value="MGI"/>
</dbReference>
<dbReference type="GO" id="GO:0140242">
    <property type="term" value="P:translation at postsynapse"/>
    <property type="evidence" value="ECO:0000303"/>
    <property type="project" value="SynGO"/>
</dbReference>
<dbReference type="GO" id="GO:0140236">
    <property type="term" value="P:translation at presynapse"/>
    <property type="evidence" value="ECO:0000303"/>
    <property type="project" value="SynGO"/>
</dbReference>
<dbReference type="CDD" id="cd00337">
    <property type="entry name" value="Ribosomal_uL14"/>
    <property type="match status" value="1"/>
</dbReference>
<dbReference type="FunFam" id="2.40.150.20:FF:000003">
    <property type="entry name" value="60S ribosomal protein L23"/>
    <property type="match status" value="1"/>
</dbReference>
<dbReference type="Gene3D" id="2.40.150.20">
    <property type="entry name" value="Ribosomal protein L14"/>
    <property type="match status" value="1"/>
</dbReference>
<dbReference type="HAMAP" id="MF_01367">
    <property type="entry name" value="Ribosomal_uL14"/>
    <property type="match status" value="1"/>
</dbReference>
<dbReference type="InterPro" id="IPR000218">
    <property type="entry name" value="Ribosomal_uL14"/>
</dbReference>
<dbReference type="InterPro" id="IPR019972">
    <property type="entry name" value="Ribosomal_uL14_CS"/>
</dbReference>
<dbReference type="InterPro" id="IPR036853">
    <property type="entry name" value="Ribosomal_uL14_sf"/>
</dbReference>
<dbReference type="NCBIfam" id="NF006344">
    <property type="entry name" value="PRK08571.1"/>
    <property type="match status" value="1"/>
</dbReference>
<dbReference type="PANTHER" id="PTHR11761">
    <property type="entry name" value="50S/60S RIBOSOMAL PROTEIN L14/L23"/>
    <property type="match status" value="1"/>
</dbReference>
<dbReference type="PANTHER" id="PTHR11761:SF8">
    <property type="entry name" value="LARGE RIBOSOMAL SUBUNIT PROTEIN UL14"/>
    <property type="match status" value="1"/>
</dbReference>
<dbReference type="Pfam" id="PF00238">
    <property type="entry name" value="Ribosomal_L14"/>
    <property type="match status" value="1"/>
</dbReference>
<dbReference type="SMART" id="SM01374">
    <property type="entry name" value="Ribosomal_L14"/>
    <property type="match status" value="1"/>
</dbReference>
<dbReference type="SUPFAM" id="SSF50193">
    <property type="entry name" value="Ribosomal protein L14"/>
    <property type="match status" value="1"/>
</dbReference>
<dbReference type="PROSITE" id="PS00049">
    <property type="entry name" value="RIBOSOMAL_L14"/>
    <property type="match status" value="1"/>
</dbReference>
<keyword id="KW-0002">3D-structure</keyword>
<keyword id="KW-0963">Cytoplasm</keyword>
<keyword id="KW-0597">Phosphoprotein</keyword>
<keyword id="KW-1185">Reference proteome</keyword>
<keyword id="KW-0687">Ribonucleoprotein</keyword>
<keyword id="KW-0689">Ribosomal protein</keyword>
<protein>
    <recommendedName>
        <fullName evidence="3">Large ribosomal subunit protein uL14</fullName>
    </recommendedName>
    <alternativeName>
        <fullName>60S ribosomal protein L23</fullName>
    </alternativeName>
</protein>
<reference key="1">
    <citation type="journal article" date="2000" name="Cytogenet. Cell Genet.">
        <title>Genomic organization and chromosome location of the murine Rpl23 gene.</title>
        <authorList>
            <person name="Kleiter N."/>
            <person name="Artner I."/>
            <person name="Copeland N.G."/>
            <person name="Gilbert D.J."/>
            <person name="Jenkins N.A."/>
            <person name="Kratochwil K."/>
        </authorList>
    </citation>
    <scope>NUCLEOTIDE SEQUENCE [GENOMIC DNA]</scope>
    <source>
        <strain>BALB/cJ</strain>
        <strain>FVB/NJ</strain>
    </source>
</reference>
<reference key="2">
    <citation type="journal article" date="2005" name="Science">
        <title>The transcriptional landscape of the mammalian genome.</title>
        <authorList>
            <person name="Carninci P."/>
            <person name="Kasukawa T."/>
            <person name="Katayama S."/>
            <person name="Gough J."/>
            <person name="Frith M.C."/>
            <person name="Maeda N."/>
            <person name="Oyama R."/>
            <person name="Ravasi T."/>
            <person name="Lenhard B."/>
            <person name="Wells C."/>
            <person name="Kodzius R."/>
            <person name="Shimokawa K."/>
            <person name="Bajic V.B."/>
            <person name="Brenner S.E."/>
            <person name="Batalov S."/>
            <person name="Forrest A.R."/>
            <person name="Zavolan M."/>
            <person name="Davis M.J."/>
            <person name="Wilming L.G."/>
            <person name="Aidinis V."/>
            <person name="Allen J.E."/>
            <person name="Ambesi-Impiombato A."/>
            <person name="Apweiler R."/>
            <person name="Aturaliya R.N."/>
            <person name="Bailey T.L."/>
            <person name="Bansal M."/>
            <person name="Baxter L."/>
            <person name="Beisel K.W."/>
            <person name="Bersano T."/>
            <person name="Bono H."/>
            <person name="Chalk A.M."/>
            <person name="Chiu K.P."/>
            <person name="Choudhary V."/>
            <person name="Christoffels A."/>
            <person name="Clutterbuck D.R."/>
            <person name="Crowe M.L."/>
            <person name="Dalla E."/>
            <person name="Dalrymple B.P."/>
            <person name="de Bono B."/>
            <person name="Della Gatta G."/>
            <person name="di Bernardo D."/>
            <person name="Down T."/>
            <person name="Engstrom P."/>
            <person name="Fagiolini M."/>
            <person name="Faulkner G."/>
            <person name="Fletcher C.F."/>
            <person name="Fukushima T."/>
            <person name="Furuno M."/>
            <person name="Futaki S."/>
            <person name="Gariboldi M."/>
            <person name="Georgii-Hemming P."/>
            <person name="Gingeras T.R."/>
            <person name="Gojobori T."/>
            <person name="Green R.E."/>
            <person name="Gustincich S."/>
            <person name="Harbers M."/>
            <person name="Hayashi Y."/>
            <person name="Hensch T.K."/>
            <person name="Hirokawa N."/>
            <person name="Hill D."/>
            <person name="Huminiecki L."/>
            <person name="Iacono M."/>
            <person name="Ikeo K."/>
            <person name="Iwama A."/>
            <person name="Ishikawa T."/>
            <person name="Jakt M."/>
            <person name="Kanapin A."/>
            <person name="Katoh M."/>
            <person name="Kawasawa Y."/>
            <person name="Kelso J."/>
            <person name="Kitamura H."/>
            <person name="Kitano H."/>
            <person name="Kollias G."/>
            <person name="Krishnan S.P."/>
            <person name="Kruger A."/>
            <person name="Kummerfeld S.K."/>
            <person name="Kurochkin I.V."/>
            <person name="Lareau L.F."/>
            <person name="Lazarevic D."/>
            <person name="Lipovich L."/>
            <person name="Liu J."/>
            <person name="Liuni S."/>
            <person name="McWilliam S."/>
            <person name="Madan Babu M."/>
            <person name="Madera M."/>
            <person name="Marchionni L."/>
            <person name="Matsuda H."/>
            <person name="Matsuzawa S."/>
            <person name="Miki H."/>
            <person name="Mignone F."/>
            <person name="Miyake S."/>
            <person name="Morris K."/>
            <person name="Mottagui-Tabar S."/>
            <person name="Mulder N."/>
            <person name="Nakano N."/>
            <person name="Nakauchi H."/>
            <person name="Ng P."/>
            <person name="Nilsson R."/>
            <person name="Nishiguchi S."/>
            <person name="Nishikawa S."/>
            <person name="Nori F."/>
            <person name="Ohara O."/>
            <person name="Okazaki Y."/>
            <person name="Orlando V."/>
            <person name="Pang K.C."/>
            <person name="Pavan W.J."/>
            <person name="Pavesi G."/>
            <person name="Pesole G."/>
            <person name="Petrovsky N."/>
            <person name="Piazza S."/>
            <person name="Reed J."/>
            <person name="Reid J.F."/>
            <person name="Ring B.Z."/>
            <person name="Ringwald M."/>
            <person name="Rost B."/>
            <person name="Ruan Y."/>
            <person name="Salzberg S.L."/>
            <person name="Sandelin A."/>
            <person name="Schneider C."/>
            <person name="Schoenbach C."/>
            <person name="Sekiguchi K."/>
            <person name="Semple C.A."/>
            <person name="Seno S."/>
            <person name="Sessa L."/>
            <person name="Sheng Y."/>
            <person name="Shibata Y."/>
            <person name="Shimada H."/>
            <person name="Shimada K."/>
            <person name="Silva D."/>
            <person name="Sinclair B."/>
            <person name="Sperling S."/>
            <person name="Stupka E."/>
            <person name="Sugiura K."/>
            <person name="Sultana R."/>
            <person name="Takenaka Y."/>
            <person name="Taki K."/>
            <person name="Tammoja K."/>
            <person name="Tan S.L."/>
            <person name="Tang S."/>
            <person name="Taylor M.S."/>
            <person name="Tegner J."/>
            <person name="Teichmann S.A."/>
            <person name="Ueda H.R."/>
            <person name="van Nimwegen E."/>
            <person name="Verardo R."/>
            <person name="Wei C.L."/>
            <person name="Yagi K."/>
            <person name="Yamanishi H."/>
            <person name="Zabarovsky E."/>
            <person name="Zhu S."/>
            <person name="Zimmer A."/>
            <person name="Hide W."/>
            <person name="Bult C."/>
            <person name="Grimmond S.M."/>
            <person name="Teasdale R.D."/>
            <person name="Liu E.T."/>
            <person name="Brusic V."/>
            <person name="Quackenbush J."/>
            <person name="Wahlestedt C."/>
            <person name="Mattick J.S."/>
            <person name="Hume D.A."/>
            <person name="Kai C."/>
            <person name="Sasaki D."/>
            <person name="Tomaru Y."/>
            <person name="Fukuda S."/>
            <person name="Kanamori-Katayama M."/>
            <person name="Suzuki M."/>
            <person name="Aoki J."/>
            <person name="Arakawa T."/>
            <person name="Iida J."/>
            <person name="Imamura K."/>
            <person name="Itoh M."/>
            <person name="Kato T."/>
            <person name="Kawaji H."/>
            <person name="Kawagashira N."/>
            <person name="Kawashima T."/>
            <person name="Kojima M."/>
            <person name="Kondo S."/>
            <person name="Konno H."/>
            <person name="Nakano K."/>
            <person name="Ninomiya N."/>
            <person name="Nishio T."/>
            <person name="Okada M."/>
            <person name="Plessy C."/>
            <person name="Shibata K."/>
            <person name="Shiraki T."/>
            <person name="Suzuki S."/>
            <person name="Tagami M."/>
            <person name="Waki K."/>
            <person name="Watahiki A."/>
            <person name="Okamura-Oho Y."/>
            <person name="Suzuki H."/>
            <person name="Kawai J."/>
            <person name="Hayashizaki Y."/>
        </authorList>
    </citation>
    <scope>NUCLEOTIDE SEQUENCE [LARGE SCALE MRNA]</scope>
    <source>
        <strain>C57BL/6J</strain>
        <tissue>Bone marrow</tissue>
        <tissue>Kidney</tissue>
    </source>
</reference>
<reference key="3">
    <citation type="journal article" date="2004" name="Genome Res.">
        <title>The status, quality, and expansion of the NIH full-length cDNA project: the Mammalian Gene Collection (MGC).</title>
        <authorList>
            <consortium name="The MGC Project Team"/>
        </authorList>
    </citation>
    <scope>NUCLEOTIDE SEQUENCE [LARGE SCALE MRNA]</scope>
    <source>
        <strain>C57BL/6J</strain>
        <tissue>Brain</tissue>
        <tissue>Mammary gland</tissue>
    </source>
</reference>
<reference key="4">
    <citation type="journal article" date="2010" name="Cell">
        <title>A tissue-specific atlas of mouse protein phosphorylation and expression.</title>
        <authorList>
            <person name="Huttlin E.L."/>
            <person name="Jedrychowski M.P."/>
            <person name="Elias J.E."/>
            <person name="Goswami T."/>
            <person name="Rad R."/>
            <person name="Beausoleil S.A."/>
            <person name="Villen J."/>
            <person name="Haas W."/>
            <person name="Sowa M.E."/>
            <person name="Gygi S.P."/>
        </authorList>
    </citation>
    <scope>IDENTIFICATION BY MASS SPECTROMETRY [LARGE SCALE ANALYSIS]</scope>
    <source>
        <tissue>Brain</tissue>
        <tissue>Brown adipose tissue</tissue>
        <tissue>Heart</tissue>
        <tissue>Kidney</tissue>
        <tissue>Liver</tissue>
        <tissue>Lung</tissue>
        <tissue>Pancreas</tissue>
        <tissue>Spleen</tissue>
        <tissue>Testis</tissue>
    </source>
</reference>
<reference evidence="4 5" key="5">
    <citation type="journal article" date="2022" name="Nature">
        <title>A male germ-cell-specific ribosome controls male fertility.</title>
        <authorList>
            <person name="Li H."/>
            <person name="Huo Y."/>
            <person name="He X."/>
            <person name="Yao L."/>
            <person name="Zhang H."/>
            <person name="Cui Y."/>
            <person name="Xiao H."/>
            <person name="Xie W."/>
            <person name="Zhang D."/>
            <person name="Wang Y."/>
            <person name="Zhang S."/>
            <person name="Tu H."/>
            <person name="Cheng Y."/>
            <person name="Guo Y."/>
            <person name="Cao X."/>
            <person name="Zhu Y."/>
            <person name="Jiang T."/>
            <person name="Guo X."/>
            <person name="Qin Y."/>
            <person name="Sha J."/>
        </authorList>
    </citation>
    <scope>STRUCTURE BY ELECTRON MICROSCOPY (3.03 ANGSTROMS) OF RIBOSOME</scope>
    <scope>FUNCTION</scope>
    <scope>SUBUNIT</scope>
    <scope>SUBCELLULAR LOCATION</scope>
</reference>
<organism>
    <name type="scientific">Mus musculus</name>
    <name type="common">Mouse</name>
    <dbReference type="NCBI Taxonomy" id="10090"/>
    <lineage>
        <taxon>Eukaryota</taxon>
        <taxon>Metazoa</taxon>
        <taxon>Chordata</taxon>
        <taxon>Craniata</taxon>
        <taxon>Vertebrata</taxon>
        <taxon>Euteleostomi</taxon>
        <taxon>Mammalia</taxon>
        <taxon>Eutheria</taxon>
        <taxon>Euarchontoglires</taxon>
        <taxon>Glires</taxon>
        <taxon>Rodentia</taxon>
        <taxon>Myomorpha</taxon>
        <taxon>Muroidea</taxon>
        <taxon>Muridae</taxon>
        <taxon>Murinae</taxon>
        <taxon>Mus</taxon>
        <taxon>Mus</taxon>
    </lineage>
</organism>